<feature type="chain" id="PRO_0000083932" description="HDA1 complex subunit 3">
    <location>
        <begin position="1"/>
        <end position="655"/>
    </location>
</feature>
<feature type="region of interest" description="Disordered" evidence="2">
    <location>
        <begin position="635"/>
        <end position="655"/>
    </location>
</feature>
<feature type="coiled-coil region" evidence="1">
    <location>
        <begin position="482"/>
        <end position="632"/>
    </location>
</feature>
<feature type="compositionally biased region" description="Basic residues" evidence="2">
    <location>
        <begin position="643"/>
        <end position="655"/>
    </location>
</feature>
<feature type="strand" evidence="8">
    <location>
        <begin position="29"/>
        <end position="35"/>
    </location>
</feature>
<feature type="helix" evidence="8">
    <location>
        <begin position="39"/>
        <end position="51"/>
    </location>
</feature>
<feature type="helix" evidence="8">
    <location>
        <begin position="53"/>
        <end position="61"/>
    </location>
</feature>
<feature type="turn" evidence="8">
    <location>
        <begin position="62"/>
        <end position="65"/>
    </location>
</feature>
<feature type="helix" evidence="8">
    <location>
        <begin position="68"/>
        <end position="86"/>
    </location>
</feature>
<feature type="helix" evidence="8">
    <location>
        <begin position="88"/>
        <end position="90"/>
    </location>
</feature>
<feature type="helix" evidence="9">
    <location>
        <begin position="93"/>
        <end position="95"/>
    </location>
</feature>
<feature type="helix" evidence="8">
    <location>
        <begin position="105"/>
        <end position="111"/>
    </location>
</feature>
<feature type="helix" evidence="8">
    <location>
        <begin position="114"/>
        <end position="126"/>
    </location>
</feature>
<feature type="strand" evidence="8">
    <location>
        <begin position="131"/>
        <end position="137"/>
    </location>
</feature>
<feature type="helix" evidence="8">
    <location>
        <begin position="141"/>
        <end position="150"/>
    </location>
</feature>
<feature type="helix" evidence="9">
    <location>
        <begin position="151"/>
        <end position="153"/>
    </location>
</feature>
<feature type="strand" evidence="8">
    <location>
        <begin position="156"/>
        <end position="162"/>
    </location>
</feature>
<feature type="strand" evidence="8">
    <location>
        <begin position="175"/>
        <end position="184"/>
    </location>
</feature>
<feature type="turn" evidence="8">
    <location>
        <begin position="188"/>
        <end position="190"/>
    </location>
</feature>
<feature type="strand" evidence="8">
    <location>
        <begin position="200"/>
        <end position="204"/>
    </location>
</feature>
<feature type="helix" evidence="8">
    <location>
        <begin position="214"/>
        <end position="220"/>
    </location>
</feature>
<feature type="strand" evidence="8">
    <location>
        <begin position="235"/>
        <end position="240"/>
    </location>
</feature>
<feature type="helix" evidence="8">
    <location>
        <begin position="244"/>
        <end position="254"/>
    </location>
</feature>
<feature type="helix" evidence="8">
    <location>
        <begin position="260"/>
        <end position="272"/>
    </location>
</feature>
<feature type="helix" evidence="8">
    <location>
        <begin position="273"/>
        <end position="275"/>
    </location>
</feature>
<feature type="turn" evidence="8">
    <location>
        <begin position="282"/>
        <end position="284"/>
    </location>
</feature>
<feature type="helix" evidence="8">
    <location>
        <begin position="285"/>
        <end position="289"/>
    </location>
</feature>
<feature type="turn" evidence="8">
    <location>
        <begin position="290"/>
        <end position="292"/>
    </location>
</feature>
<feature type="helix" evidence="8">
    <location>
        <begin position="293"/>
        <end position="295"/>
    </location>
</feature>
<feature type="helix" evidence="8">
    <location>
        <begin position="296"/>
        <end position="300"/>
    </location>
</feature>
<feature type="helix" evidence="8">
    <location>
        <begin position="319"/>
        <end position="327"/>
    </location>
</feature>
<feature type="helix" evidence="9">
    <location>
        <begin position="405"/>
        <end position="442"/>
    </location>
</feature>
<feature type="strand" evidence="9">
    <location>
        <begin position="446"/>
        <end position="448"/>
    </location>
</feature>
<feature type="helix" evidence="9">
    <location>
        <begin position="449"/>
        <end position="514"/>
    </location>
</feature>
<feature type="strand" evidence="9">
    <location>
        <begin position="517"/>
        <end position="520"/>
    </location>
</feature>
<feature type="helix" evidence="9">
    <location>
        <begin position="523"/>
        <end position="632"/>
    </location>
</feature>
<feature type="helix" evidence="9">
    <location>
        <begin position="634"/>
        <end position="638"/>
    </location>
</feature>
<keyword id="KW-0002">3D-structure</keyword>
<keyword id="KW-0156">Chromatin regulator</keyword>
<keyword id="KW-0175">Coiled coil</keyword>
<keyword id="KW-0539">Nucleus</keyword>
<keyword id="KW-1185">Reference proteome</keyword>
<keyword id="KW-0678">Repressor</keyword>
<keyword id="KW-0804">Transcription</keyword>
<keyword id="KW-0805">Transcription regulation</keyword>
<dbReference type="EMBL" id="U25842">
    <property type="protein sequence ID" value="AAB68112.1"/>
    <property type="molecule type" value="Genomic_DNA"/>
</dbReference>
<dbReference type="EMBL" id="BK006949">
    <property type="protein sequence ID" value="DAA11595.1"/>
    <property type="molecule type" value="Genomic_DNA"/>
</dbReference>
<dbReference type="PIR" id="S59836">
    <property type="entry name" value="S59836"/>
</dbReference>
<dbReference type="RefSeq" id="NP_015505.1">
    <property type="nucleotide sequence ID" value="NM_001184276.1"/>
</dbReference>
<dbReference type="PDB" id="3HGQ">
    <property type="method" value="X-ray"/>
    <property type="resolution" value="3.00 A"/>
    <property type="chains" value="A/B/C/D=6-333"/>
</dbReference>
<dbReference type="PDB" id="3HGT">
    <property type="method" value="X-ray"/>
    <property type="resolution" value="2.20 A"/>
    <property type="chains" value="A/B=6-333"/>
</dbReference>
<dbReference type="PDB" id="6Z6F">
    <property type="method" value="EM"/>
    <property type="resolution" value="3.11 A"/>
    <property type="chains" value="D=28-639"/>
</dbReference>
<dbReference type="PDB" id="6Z6H">
    <property type="method" value="EM"/>
    <property type="resolution" value="8.55 A"/>
    <property type="chains" value="D/J=28-639"/>
</dbReference>
<dbReference type="PDB" id="6Z6O">
    <property type="method" value="EM"/>
    <property type="resolution" value="3.80 A"/>
    <property type="chains" value="D/H/L/P=28-639"/>
</dbReference>
<dbReference type="PDB" id="6Z6P">
    <property type="method" value="EM"/>
    <property type="resolution" value="4.43 A"/>
    <property type="chains" value="M=28-639"/>
</dbReference>
<dbReference type="PDBsum" id="3HGQ"/>
<dbReference type="PDBsum" id="3HGT"/>
<dbReference type="PDBsum" id="6Z6F"/>
<dbReference type="PDBsum" id="6Z6H"/>
<dbReference type="PDBsum" id="6Z6O"/>
<dbReference type="PDBsum" id="6Z6P"/>
<dbReference type="EMDB" id="EMD-11092"/>
<dbReference type="EMDB" id="EMD-11094"/>
<dbReference type="EMDB" id="EMD-11101"/>
<dbReference type="EMDB" id="EMD-11102"/>
<dbReference type="SMR" id="Q06623"/>
<dbReference type="BioGRID" id="36351">
    <property type="interactions" value="426"/>
</dbReference>
<dbReference type="ComplexPortal" id="CPX-1884">
    <property type="entry name" value="HDA1 histone deacetylase complex"/>
</dbReference>
<dbReference type="DIP" id="DIP-4636N"/>
<dbReference type="FunCoup" id="Q06623">
    <property type="interactions" value="79"/>
</dbReference>
<dbReference type="IntAct" id="Q06623">
    <property type="interactions" value="9"/>
</dbReference>
<dbReference type="MINT" id="Q06623"/>
<dbReference type="STRING" id="4932.YPR179C"/>
<dbReference type="iPTMnet" id="Q06623"/>
<dbReference type="PaxDb" id="4932-YPR179C"/>
<dbReference type="PeptideAtlas" id="Q06623"/>
<dbReference type="EnsemblFungi" id="YPR179C_mRNA">
    <property type="protein sequence ID" value="YPR179C"/>
    <property type="gene ID" value="YPR179C"/>
</dbReference>
<dbReference type="GeneID" id="856309"/>
<dbReference type="KEGG" id="sce:YPR179C"/>
<dbReference type="AGR" id="SGD:S000006383"/>
<dbReference type="SGD" id="S000006383">
    <property type="gene designation" value="HDA3"/>
</dbReference>
<dbReference type="VEuPathDB" id="FungiDB:YPR179C"/>
<dbReference type="eggNOG" id="ENOG502QT9V">
    <property type="taxonomic scope" value="Eukaryota"/>
</dbReference>
<dbReference type="HOGENOM" id="CLU_026579_0_0_1"/>
<dbReference type="InParanoid" id="Q06623"/>
<dbReference type="OMA" id="GDYWLPT"/>
<dbReference type="OrthoDB" id="3647690at2759"/>
<dbReference type="BioCyc" id="YEAST:G3O-34304-MONOMER"/>
<dbReference type="BioGRID-ORCS" id="856309">
    <property type="hits" value="0 hits in 10 CRISPR screens"/>
</dbReference>
<dbReference type="EvolutionaryTrace" id="Q06623"/>
<dbReference type="PRO" id="PR:Q06623"/>
<dbReference type="Proteomes" id="UP000002311">
    <property type="component" value="Chromosome XVI"/>
</dbReference>
<dbReference type="RNAct" id="Q06623">
    <property type="molecule type" value="protein"/>
</dbReference>
<dbReference type="GO" id="GO:0005829">
    <property type="term" value="C:cytosol"/>
    <property type="evidence" value="ECO:0000314"/>
    <property type="project" value="SGD"/>
</dbReference>
<dbReference type="GO" id="GO:0070823">
    <property type="term" value="C:HDA1 complex"/>
    <property type="evidence" value="ECO:0000314"/>
    <property type="project" value="SGD"/>
</dbReference>
<dbReference type="GO" id="GO:0005634">
    <property type="term" value="C:nucleus"/>
    <property type="evidence" value="ECO:0000314"/>
    <property type="project" value="SGD"/>
</dbReference>
<dbReference type="GO" id="GO:0003682">
    <property type="term" value="F:chromatin binding"/>
    <property type="evidence" value="ECO:0000314"/>
    <property type="project" value="SGD"/>
</dbReference>
<dbReference type="GO" id="GO:0003677">
    <property type="term" value="F:DNA binding"/>
    <property type="evidence" value="ECO:0000314"/>
    <property type="project" value="SGD"/>
</dbReference>
<dbReference type="GO" id="GO:0140750">
    <property type="term" value="F:nucleosome array spacer activity"/>
    <property type="evidence" value="ECO:0000318"/>
    <property type="project" value="GO_Central"/>
</dbReference>
<dbReference type="GO" id="GO:0007059">
    <property type="term" value="P:chromosome segregation"/>
    <property type="evidence" value="ECO:0000315"/>
    <property type="project" value="SGD"/>
</dbReference>
<dbReference type="GO" id="GO:0000122">
    <property type="term" value="P:negative regulation of transcription by RNA polymerase II"/>
    <property type="evidence" value="ECO:0000314"/>
    <property type="project" value="ComplexPortal"/>
</dbReference>
<dbReference type="GO" id="GO:0045944">
    <property type="term" value="P:positive regulation of transcription by RNA polymerase II"/>
    <property type="evidence" value="ECO:0000318"/>
    <property type="project" value="GO_Central"/>
</dbReference>
<dbReference type="GO" id="GO:0031047">
    <property type="term" value="P:regulatory ncRNA-mediated gene silencing"/>
    <property type="evidence" value="ECO:0000315"/>
    <property type="project" value="SGD"/>
</dbReference>
<dbReference type="FunFam" id="3.40.50.12360:FF:000001">
    <property type="entry name" value="HDA1 complex subunit 3"/>
    <property type="match status" value="1"/>
</dbReference>
<dbReference type="Gene3D" id="3.40.50.12360">
    <property type="match status" value="1"/>
</dbReference>
<dbReference type="InterPro" id="IPR038609">
    <property type="entry name" value="HDA1_su2/3_sf"/>
</dbReference>
<dbReference type="InterPro" id="IPR021006">
    <property type="entry name" value="Hda2/3"/>
</dbReference>
<dbReference type="InterPro" id="IPR026216">
    <property type="entry name" value="HDA3"/>
</dbReference>
<dbReference type="Pfam" id="PF11496">
    <property type="entry name" value="HDA2-3"/>
    <property type="match status" value="1"/>
</dbReference>
<dbReference type="PRINTS" id="PR02093">
    <property type="entry name" value="HDA1SUBUNIT3"/>
</dbReference>
<gene>
    <name type="primary">HDA3</name>
    <name type="synonym">PLO1</name>
    <name type="ordered locus">YPR179C</name>
</gene>
<proteinExistence type="evidence at protein level"/>
<accession>Q06623</accession>
<accession>D6W4H9</accession>
<comment type="function">
    <text evidence="3 6">Required for activity of HDA1 histone deacetylase complex. The HDA1 histone deacetylase complex is responsible for the deacetylation of lysine residues on the N-terminal part of the core histones (H2A, H2B, H3 and H4). Histone deacetylation gives a tag for epigenetic repression and plays an important role in transcriptional regulation, cell cycle progression and developmental events.</text>
</comment>
<comment type="subunit">
    <text evidence="3 6">Heterodimer with HDA2. Component of the HDA1 histone deacetylase complex composed of at least one HDA1 homodimer and one HDA2/HDA3 heterodimer. Interacts with HDA1 and HDA3.</text>
</comment>
<comment type="interaction">
    <interactant intactId="EBI-38663">
        <id>Q06623</id>
    </interactant>
    <interactant intactId="EBI-8206">
        <id>P53973</id>
        <label>HDA1</label>
    </interactant>
    <organismsDiffer>false</organismsDiffer>
    <experiments>7</experiments>
</comment>
<comment type="interaction">
    <interactant intactId="EBI-38663">
        <id>Q06623</id>
    </interactant>
    <interactant intactId="EBI-32800">
        <id>Q06629</id>
        <label>HDA2</label>
    </interactant>
    <organismsDiffer>false</organismsDiffer>
    <experiments>6</experiments>
</comment>
<comment type="subcellular location">
    <subcellularLocation>
        <location evidence="4">Nucleus</location>
    </subcellularLocation>
</comment>
<comment type="miscellaneous">
    <text evidence="5">Present with 1100 molecules/cell in log phase SD medium.</text>
</comment>
<comment type="similarity">
    <text evidence="7">Belongs to the HDA2/3 family. HDA3 subfamily.</text>
</comment>
<reference key="1">
    <citation type="journal article" date="1997" name="Nature">
        <title>The nucleotide sequence of Saccharomyces cerevisiae chromosome XVI.</title>
        <authorList>
            <person name="Bussey H."/>
            <person name="Storms R.K."/>
            <person name="Ahmed A."/>
            <person name="Albermann K."/>
            <person name="Allen E."/>
            <person name="Ansorge W."/>
            <person name="Araujo R."/>
            <person name="Aparicio A."/>
            <person name="Barrell B.G."/>
            <person name="Badcock K."/>
            <person name="Benes V."/>
            <person name="Botstein D."/>
            <person name="Bowman S."/>
            <person name="Brueckner M."/>
            <person name="Carpenter J."/>
            <person name="Cherry J.M."/>
            <person name="Chung E."/>
            <person name="Churcher C.M."/>
            <person name="Coster F."/>
            <person name="Davis K."/>
            <person name="Davis R.W."/>
            <person name="Dietrich F.S."/>
            <person name="Delius H."/>
            <person name="DiPaolo T."/>
            <person name="Dubois E."/>
            <person name="Duesterhoeft A."/>
            <person name="Duncan M."/>
            <person name="Floeth M."/>
            <person name="Fortin N."/>
            <person name="Friesen J.D."/>
            <person name="Fritz C."/>
            <person name="Goffeau A."/>
            <person name="Hall J."/>
            <person name="Hebling U."/>
            <person name="Heumann K."/>
            <person name="Hilbert H."/>
            <person name="Hillier L.W."/>
            <person name="Hunicke-Smith S."/>
            <person name="Hyman R.W."/>
            <person name="Johnston M."/>
            <person name="Kalman S."/>
            <person name="Kleine K."/>
            <person name="Komp C."/>
            <person name="Kurdi O."/>
            <person name="Lashkari D."/>
            <person name="Lew H."/>
            <person name="Lin A."/>
            <person name="Lin D."/>
            <person name="Louis E.J."/>
            <person name="Marathe R."/>
            <person name="Messenguy F."/>
            <person name="Mewes H.-W."/>
            <person name="Mirtipati S."/>
            <person name="Moestl D."/>
            <person name="Mueller-Auer S."/>
            <person name="Namath A."/>
            <person name="Nentwich U."/>
            <person name="Oefner P."/>
            <person name="Pearson D."/>
            <person name="Petel F.X."/>
            <person name="Pohl T.M."/>
            <person name="Purnelle B."/>
            <person name="Rajandream M.A."/>
            <person name="Rechmann S."/>
            <person name="Rieger M."/>
            <person name="Riles L."/>
            <person name="Roberts D."/>
            <person name="Schaefer M."/>
            <person name="Scharfe M."/>
            <person name="Scherens B."/>
            <person name="Schramm S."/>
            <person name="Schroeder M."/>
            <person name="Sdicu A.-M."/>
            <person name="Tettelin H."/>
            <person name="Urrestarazu L.A."/>
            <person name="Ushinsky S."/>
            <person name="Vierendeels F."/>
            <person name="Vissers S."/>
            <person name="Voss H."/>
            <person name="Walsh S.V."/>
            <person name="Wambutt R."/>
            <person name="Wang Y."/>
            <person name="Wedler E."/>
            <person name="Wedler H."/>
            <person name="Winnett E."/>
            <person name="Zhong W.-W."/>
            <person name="Zollner A."/>
            <person name="Vo D.H."/>
            <person name="Hani J."/>
        </authorList>
    </citation>
    <scope>NUCLEOTIDE SEQUENCE [LARGE SCALE GENOMIC DNA]</scope>
    <source>
        <strain>ATCC 204508 / S288c</strain>
    </source>
</reference>
<reference key="2">
    <citation type="journal article" date="2014" name="G3 (Bethesda)">
        <title>The reference genome sequence of Saccharomyces cerevisiae: Then and now.</title>
        <authorList>
            <person name="Engel S.R."/>
            <person name="Dietrich F.S."/>
            <person name="Fisk D.G."/>
            <person name="Binkley G."/>
            <person name="Balakrishnan R."/>
            <person name="Costanzo M.C."/>
            <person name="Dwight S.S."/>
            <person name="Hitz B.C."/>
            <person name="Karra K."/>
            <person name="Nash R.S."/>
            <person name="Weng S."/>
            <person name="Wong E.D."/>
            <person name="Lloyd P."/>
            <person name="Skrzypek M.S."/>
            <person name="Miyasato S.R."/>
            <person name="Simison M."/>
            <person name="Cherry J.M."/>
        </authorList>
    </citation>
    <scope>GENOME REANNOTATION</scope>
    <source>
        <strain>ATCC 204508 / S288c</strain>
    </source>
</reference>
<reference key="3">
    <citation type="journal article" date="1996" name="J. Biol. Chem.">
        <title>HDA1 and HDA3 are components of a yeast histone deacetylase (HDA) complex.</title>
        <authorList>
            <person name="Carmen A.A."/>
            <person name="Rundlett S.E."/>
            <person name="Grunstein M."/>
        </authorList>
    </citation>
    <scope>FUNCTION</scope>
    <scope>IDENTIFICATION IN THE HDA1 HISTONE DEACETYLASE COMPLEX</scope>
</reference>
<reference key="4">
    <citation type="journal article" date="2001" name="Proc. Natl. Acad. Sci. U.S.A.">
        <title>HDA2 and HDA3 are related proteins that interact with and are essential for the activity of the yeast histone deacetylase HDA1.</title>
        <authorList>
            <person name="Wu J."/>
            <person name="Carmen A.A."/>
            <person name="Kobayashi R."/>
            <person name="Suka N."/>
            <person name="Grunstein M."/>
        </authorList>
    </citation>
    <scope>FUNCTION</scope>
    <scope>INTERACTION WITH HDA1 AND HDA3</scope>
</reference>
<reference key="5">
    <citation type="journal article" date="2003" name="Nature">
        <title>Global analysis of protein localization in budding yeast.</title>
        <authorList>
            <person name="Huh W.-K."/>
            <person name="Falvo J.V."/>
            <person name="Gerke L.C."/>
            <person name="Carroll A.S."/>
            <person name="Howson R.W."/>
            <person name="Weissman J.S."/>
            <person name="O'Shea E.K."/>
        </authorList>
    </citation>
    <scope>SUBCELLULAR LOCATION [LARGE SCALE ANALYSIS]</scope>
</reference>
<reference key="6">
    <citation type="journal article" date="2003" name="Nature">
        <title>Global analysis of protein expression in yeast.</title>
        <authorList>
            <person name="Ghaemmaghami S."/>
            <person name="Huh W.-K."/>
            <person name="Bower K."/>
            <person name="Howson R.W."/>
            <person name="Belle A."/>
            <person name="Dephoure N."/>
            <person name="O'Shea E.K."/>
            <person name="Weissman J.S."/>
        </authorList>
    </citation>
    <scope>LEVEL OF PROTEIN EXPRESSION [LARGE SCALE ANALYSIS]</scope>
</reference>
<evidence type="ECO:0000255" key="1"/>
<evidence type="ECO:0000256" key="2">
    <source>
        <dbReference type="SAM" id="MobiDB-lite"/>
    </source>
</evidence>
<evidence type="ECO:0000269" key="3">
    <source>
    </source>
</evidence>
<evidence type="ECO:0000269" key="4">
    <source>
    </source>
</evidence>
<evidence type="ECO:0000269" key="5">
    <source>
    </source>
</evidence>
<evidence type="ECO:0000269" key="6">
    <source>
    </source>
</evidence>
<evidence type="ECO:0000305" key="7"/>
<evidence type="ECO:0007829" key="8">
    <source>
        <dbReference type="PDB" id="3HGT"/>
    </source>
</evidence>
<evidence type="ECO:0007829" key="9">
    <source>
        <dbReference type="PDB" id="6Z6F"/>
    </source>
</evidence>
<sequence>MDLLRILDTKPIPTIVDATTLGISGNTSGDYWLPTTMSLYQKELTDQIVSLHYSDILRYFETSHYKEDVILESMKTMCLNGSLVATHPYLLIDHYMPKSLITRDVPAHLAENSGKFSVLRDLINLVQEYETETAIVCRPGRTMDLLEALLLGNKVHIKRYDGHSIKSKQKANDFSCTVHLFSSEGINFTKYPIKSKARFDMLICLDTTVDTSQKDIQYLLQYKRERKGLERYAPIVRLVAINSIDHCRLFFGKKFDKNSREYLENVTAAMVILRDRLGTLPPDLRPIYSQKLHYLVEWLENPTVPWPLPDIYPLKQYTSMDVERSLLTEVHFKKSDDQLEDAFSNCSKKRGRHGANKAASSTVAGIEDNITPSFYSTKRLKNDYYTNPLKQDMTQLTGITTADNSSNVNYHLSSGIITHKLIQSMGEVYMDICVQKQELDDYSCLDDLQNDHLKFFSNEDEKIIKEYETVLRTNNENLNRSHELEVENNLKFSQIETLEKDIETLKGSLMAQGETLSKLKDAFVKTDNVQDEIEKEERVSVSRDTEKKYMEQEIKRAVDAIRENEEETHKLNEKQNGLESELKLKFEKSEISTKELNEKIGFLKKELKLENDLNEELVGQLSKTMDNLENLTIPRVRTQNGNTKKKSRAKKPGNV</sequence>
<organism>
    <name type="scientific">Saccharomyces cerevisiae (strain ATCC 204508 / S288c)</name>
    <name type="common">Baker's yeast</name>
    <dbReference type="NCBI Taxonomy" id="559292"/>
    <lineage>
        <taxon>Eukaryota</taxon>
        <taxon>Fungi</taxon>
        <taxon>Dikarya</taxon>
        <taxon>Ascomycota</taxon>
        <taxon>Saccharomycotina</taxon>
        <taxon>Saccharomycetes</taxon>
        <taxon>Saccharomycetales</taxon>
        <taxon>Saccharomycetaceae</taxon>
        <taxon>Saccharomyces</taxon>
    </lineage>
</organism>
<name>HDA3_YEAST</name>
<protein>
    <recommendedName>
        <fullName>HDA1 complex subunit 3</fullName>
    </recommendedName>
    <alternativeName>
        <fullName>Histone deacetylase complex 1 subunit 3</fullName>
    </alternativeName>
</protein>